<reference key="1">
    <citation type="submission" date="2007-07" db="EMBL/GenBank/DDBJ databases">
        <title>Complete genome sequence of Campylobacter jejuni subsp doylei 269.97 isolated from human blood.</title>
        <authorList>
            <person name="Fouts D.E."/>
            <person name="Mongodin E.F."/>
            <person name="Puiu D."/>
            <person name="Sebastian Y."/>
            <person name="Miller W.G."/>
            <person name="Mandrell R.E."/>
            <person name="Lastovica A.J."/>
            <person name="Nelson K.E."/>
        </authorList>
    </citation>
    <scope>NUCLEOTIDE SEQUENCE [LARGE SCALE GENOMIC DNA]</scope>
    <source>
        <strain>ATCC BAA-1458 / RM4099 / 269.97</strain>
    </source>
</reference>
<comment type="function">
    <text evidence="1">Functions in the biosynthesis of branched-chain amino acids. Catalyzes the dehydration of (2R,3R)-2,3-dihydroxy-3-methylpentanoate (2,3-dihydroxy-3-methylvalerate) into 2-oxo-3-methylpentanoate (2-oxo-3-methylvalerate) and of (2R)-2,3-dihydroxy-3-methylbutanoate (2,3-dihydroxyisovalerate) into 2-oxo-3-methylbutanoate (2-oxoisovalerate), the penultimate precursor to L-isoleucine and L-valine, respectively.</text>
</comment>
<comment type="catalytic activity">
    <reaction evidence="1">
        <text>(2R)-2,3-dihydroxy-3-methylbutanoate = 3-methyl-2-oxobutanoate + H2O</text>
        <dbReference type="Rhea" id="RHEA:24809"/>
        <dbReference type="ChEBI" id="CHEBI:11851"/>
        <dbReference type="ChEBI" id="CHEBI:15377"/>
        <dbReference type="ChEBI" id="CHEBI:49072"/>
        <dbReference type="EC" id="4.2.1.9"/>
    </reaction>
    <physiologicalReaction direction="left-to-right" evidence="1">
        <dbReference type="Rhea" id="RHEA:24810"/>
    </physiologicalReaction>
</comment>
<comment type="catalytic activity">
    <reaction evidence="1">
        <text>(2R,3R)-2,3-dihydroxy-3-methylpentanoate = (S)-3-methyl-2-oxopentanoate + H2O</text>
        <dbReference type="Rhea" id="RHEA:27694"/>
        <dbReference type="ChEBI" id="CHEBI:15377"/>
        <dbReference type="ChEBI" id="CHEBI:35146"/>
        <dbReference type="ChEBI" id="CHEBI:49258"/>
        <dbReference type="EC" id="4.2.1.9"/>
    </reaction>
    <physiologicalReaction direction="left-to-right" evidence="1">
        <dbReference type="Rhea" id="RHEA:27695"/>
    </physiologicalReaction>
</comment>
<comment type="cofactor">
    <cofactor evidence="1">
        <name>[2Fe-2S] cluster</name>
        <dbReference type="ChEBI" id="CHEBI:190135"/>
    </cofactor>
    <text evidence="1">Binds 1 [2Fe-2S] cluster per subunit. This cluster acts as a Lewis acid cofactor.</text>
</comment>
<comment type="cofactor">
    <cofactor evidence="1">
        <name>Mg(2+)</name>
        <dbReference type="ChEBI" id="CHEBI:18420"/>
    </cofactor>
</comment>
<comment type="pathway">
    <text evidence="1">Amino-acid biosynthesis; L-isoleucine biosynthesis; L-isoleucine from 2-oxobutanoate: step 3/4.</text>
</comment>
<comment type="pathway">
    <text evidence="1">Amino-acid biosynthesis; L-valine biosynthesis; L-valine from pyruvate: step 3/4.</text>
</comment>
<comment type="subunit">
    <text evidence="1">Homodimer.</text>
</comment>
<comment type="similarity">
    <text evidence="1">Belongs to the IlvD/Edd family.</text>
</comment>
<proteinExistence type="inferred from homology"/>
<keyword id="KW-0001">2Fe-2S</keyword>
<keyword id="KW-0028">Amino-acid biosynthesis</keyword>
<keyword id="KW-0100">Branched-chain amino acid biosynthesis</keyword>
<keyword id="KW-0408">Iron</keyword>
<keyword id="KW-0411">Iron-sulfur</keyword>
<keyword id="KW-0456">Lyase</keyword>
<keyword id="KW-0460">Magnesium</keyword>
<keyword id="KW-0479">Metal-binding</keyword>
<sequence length="558" mass="60186">MRSDAIKKGHLKAPNRSLLRACGLKDEDFDKPFIGVANSYIDIIPGHYFLNDYAKIIKDEIRKNGCVPFEFNTIGIDDGIAMGHEGMLYSLPSREIIANSIETVMNAHQLDALICIPNCDKITPGMLMGALRVNVPTIFVSGGPMASGVTKKGEKISLSSVFEAVGAYEAKKISEEEFKDIECSACPSGGSCSGMFTANSMNTLCEAMGIALEGNGTILALSKEREELLRKAARRICEIALDERFKIRNIITQKAVRNAMIVDMAMGGSSNTVLHMLAISREAGVALDIKDLNFISSKVAHIAKIAPSLNSVYMDDIHKAGGVSAVMAEISSRQGHILELDALTITGESLEERLKNAKIKDENIIRKVDNAYSKVGGLAILFGNLAEQGCVIKTAGIIGERKFKGKAVCFNSQDEAIKGIIKGKVQKGNVCVIRYEGPKGGPGMQEMLSPTSLLMGMGLGADVALITDGRFSGATRGLSIGHISPEAAEGGLIGLLKDGDEIEIDVDAYTIHANLSEKEITQRKKEFVLPQKEVPSRWLRMYQKLVSNASKGAVLDME</sequence>
<gene>
    <name evidence="1" type="primary">ilvD</name>
    <name type="ordered locus">JJD26997_0013</name>
</gene>
<accession>A7H1A6</accession>
<dbReference type="EC" id="4.2.1.9" evidence="1"/>
<dbReference type="EMBL" id="CP000768">
    <property type="protein sequence ID" value="ABS44270.1"/>
    <property type="molecule type" value="Genomic_DNA"/>
</dbReference>
<dbReference type="SMR" id="A7H1A6"/>
<dbReference type="KEGG" id="cjd:JJD26997_0013"/>
<dbReference type="HOGENOM" id="CLU_014271_4_2_7"/>
<dbReference type="UniPathway" id="UPA00047">
    <property type="reaction ID" value="UER00057"/>
</dbReference>
<dbReference type="UniPathway" id="UPA00049">
    <property type="reaction ID" value="UER00061"/>
</dbReference>
<dbReference type="Proteomes" id="UP000002302">
    <property type="component" value="Chromosome"/>
</dbReference>
<dbReference type="GO" id="GO:0005829">
    <property type="term" value="C:cytosol"/>
    <property type="evidence" value="ECO:0007669"/>
    <property type="project" value="TreeGrafter"/>
</dbReference>
<dbReference type="GO" id="GO:0051537">
    <property type="term" value="F:2 iron, 2 sulfur cluster binding"/>
    <property type="evidence" value="ECO:0007669"/>
    <property type="project" value="UniProtKB-UniRule"/>
</dbReference>
<dbReference type="GO" id="GO:0004160">
    <property type="term" value="F:dihydroxy-acid dehydratase activity"/>
    <property type="evidence" value="ECO:0007669"/>
    <property type="project" value="UniProtKB-UniRule"/>
</dbReference>
<dbReference type="GO" id="GO:0000287">
    <property type="term" value="F:magnesium ion binding"/>
    <property type="evidence" value="ECO:0007669"/>
    <property type="project" value="UniProtKB-UniRule"/>
</dbReference>
<dbReference type="GO" id="GO:0009097">
    <property type="term" value="P:isoleucine biosynthetic process"/>
    <property type="evidence" value="ECO:0007669"/>
    <property type="project" value="UniProtKB-UniRule"/>
</dbReference>
<dbReference type="GO" id="GO:0009099">
    <property type="term" value="P:L-valine biosynthetic process"/>
    <property type="evidence" value="ECO:0007669"/>
    <property type="project" value="UniProtKB-UniRule"/>
</dbReference>
<dbReference type="FunFam" id="3.50.30.80:FF:000001">
    <property type="entry name" value="Dihydroxy-acid dehydratase"/>
    <property type="match status" value="1"/>
</dbReference>
<dbReference type="Gene3D" id="3.50.30.80">
    <property type="entry name" value="IlvD/EDD C-terminal domain-like"/>
    <property type="match status" value="1"/>
</dbReference>
<dbReference type="HAMAP" id="MF_00012">
    <property type="entry name" value="IlvD"/>
    <property type="match status" value="1"/>
</dbReference>
<dbReference type="InterPro" id="IPR042096">
    <property type="entry name" value="Dihydro-acid_dehy_C"/>
</dbReference>
<dbReference type="InterPro" id="IPR004404">
    <property type="entry name" value="DihydroxyA_deHydtase"/>
</dbReference>
<dbReference type="InterPro" id="IPR020558">
    <property type="entry name" value="DiOHA_6PGluconate_deHydtase_CS"/>
</dbReference>
<dbReference type="InterPro" id="IPR056740">
    <property type="entry name" value="ILV_EDD_C"/>
</dbReference>
<dbReference type="InterPro" id="IPR000581">
    <property type="entry name" value="ILV_EDD_N"/>
</dbReference>
<dbReference type="InterPro" id="IPR037237">
    <property type="entry name" value="IlvD/EDD_N"/>
</dbReference>
<dbReference type="NCBIfam" id="TIGR00110">
    <property type="entry name" value="ilvD"/>
    <property type="match status" value="1"/>
</dbReference>
<dbReference type="NCBIfam" id="NF002068">
    <property type="entry name" value="PRK00911.1"/>
    <property type="match status" value="1"/>
</dbReference>
<dbReference type="PANTHER" id="PTHR43661">
    <property type="entry name" value="D-XYLONATE DEHYDRATASE"/>
    <property type="match status" value="1"/>
</dbReference>
<dbReference type="PANTHER" id="PTHR43661:SF3">
    <property type="entry name" value="D-XYLONATE DEHYDRATASE YAGF-RELATED"/>
    <property type="match status" value="1"/>
</dbReference>
<dbReference type="Pfam" id="PF24877">
    <property type="entry name" value="ILV_EDD_C"/>
    <property type="match status" value="1"/>
</dbReference>
<dbReference type="Pfam" id="PF00920">
    <property type="entry name" value="ILVD_EDD_N"/>
    <property type="match status" value="1"/>
</dbReference>
<dbReference type="SUPFAM" id="SSF143975">
    <property type="entry name" value="IlvD/EDD N-terminal domain-like"/>
    <property type="match status" value="1"/>
</dbReference>
<dbReference type="SUPFAM" id="SSF52016">
    <property type="entry name" value="LeuD/IlvD-like"/>
    <property type="match status" value="1"/>
</dbReference>
<dbReference type="PROSITE" id="PS00886">
    <property type="entry name" value="ILVD_EDD_1"/>
    <property type="match status" value="1"/>
</dbReference>
<dbReference type="PROSITE" id="PS00887">
    <property type="entry name" value="ILVD_EDD_2"/>
    <property type="match status" value="1"/>
</dbReference>
<evidence type="ECO:0000255" key="1">
    <source>
        <dbReference type="HAMAP-Rule" id="MF_00012"/>
    </source>
</evidence>
<organism>
    <name type="scientific">Campylobacter jejuni subsp. doylei (strain ATCC BAA-1458 / RM4099 / 269.97)</name>
    <dbReference type="NCBI Taxonomy" id="360109"/>
    <lineage>
        <taxon>Bacteria</taxon>
        <taxon>Pseudomonadati</taxon>
        <taxon>Campylobacterota</taxon>
        <taxon>Epsilonproteobacteria</taxon>
        <taxon>Campylobacterales</taxon>
        <taxon>Campylobacteraceae</taxon>
        <taxon>Campylobacter</taxon>
    </lineage>
</organism>
<feature type="chain" id="PRO_1000000972" description="Dihydroxy-acid dehydratase">
    <location>
        <begin position="1"/>
        <end position="558"/>
    </location>
</feature>
<feature type="active site" description="Proton acceptor" evidence="1">
    <location>
        <position position="472"/>
    </location>
</feature>
<feature type="binding site" evidence="1">
    <location>
        <position position="78"/>
    </location>
    <ligand>
        <name>Mg(2+)</name>
        <dbReference type="ChEBI" id="CHEBI:18420"/>
    </ligand>
</feature>
<feature type="binding site" evidence="1">
    <location>
        <position position="119"/>
    </location>
    <ligand>
        <name>[2Fe-2S] cluster</name>
        <dbReference type="ChEBI" id="CHEBI:190135"/>
    </ligand>
</feature>
<feature type="binding site" evidence="1">
    <location>
        <position position="120"/>
    </location>
    <ligand>
        <name>Mg(2+)</name>
        <dbReference type="ChEBI" id="CHEBI:18420"/>
    </ligand>
</feature>
<feature type="binding site" description="via carbamate group" evidence="1">
    <location>
        <position position="121"/>
    </location>
    <ligand>
        <name>Mg(2+)</name>
        <dbReference type="ChEBI" id="CHEBI:18420"/>
    </ligand>
</feature>
<feature type="binding site" evidence="1">
    <location>
        <position position="192"/>
    </location>
    <ligand>
        <name>[2Fe-2S] cluster</name>
        <dbReference type="ChEBI" id="CHEBI:190135"/>
    </ligand>
</feature>
<feature type="binding site" evidence="1">
    <location>
        <position position="446"/>
    </location>
    <ligand>
        <name>Mg(2+)</name>
        <dbReference type="ChEBI" id="CHEBI:18420"/>
    </ligand>
</feature>
<feature type="modified residue" description="N6-carboxylysine" evidence="1">
    <location>
        <position position="121"/>
    </location>
</feature>
<name>ILVD_CAMJD</name>
<protein>
    <recommendedName>
        <fullName evidence="1">Dihydroxy-acid dehydratase</fullName>
        <shortName evidence="1">DAD</shortName>
        <ecNumber evidence="1">4.2.1.9</ecNumber>
    </recommendedName>
</protein>